<organism>
    <name type="scientific">Pseudomonas putida (strain ATCC 700007 / DSM 6899 / JCM 31910 / BCRC 17059 / LMG 24140 / F1)</name>
    <dbReference type="NCBI Taxonomy" id="351746"/>
    <lineage>
        <taxon>Bacteria</taxon>
        <taxon>Pseudomonadati</taxon>
        <taxon>Pseudomonadota</taxon>
        <taxon>Gammaproteobacteria</taxon>
        <taxon>Pseudomonadales</taxon>
        <taxon>Pseudomonadaceae</taxon>
        <taxon>Pseudomonas</taxon>
    </lineage>
</organism>
<feature type="chain" id="PRO_1000066276" description="Orotate phosphoribosyltransferase">
    <location>
        <begin position="1"/>
        <end position="213"/>
    </location>
</feature>
<feature type="binding site" description="in other chain" evidence="1">
    <location>
        <position position="26"/>
    </location>
    <ligand>
        <name>5-phospho-alpha-D-ribose 1-diphosphate</name>
        <dbReference type="ChEBI" id="CHEBI:58017"/>
        <note>ligand shared between dimeric partners</note>
    </ligand>
</feature>
<feature type="binding site" evidence="1">
    <location>
        <begin position="34"/>
        <end position="35"/>
    </location>
    <ligand>
        <name>orotate</name>
        <dbReference type="ChEBI" id="CHEBI:30839"/>
    </ligand>
</feature>
<feature type="binding site" description="in other chain" evidence="1">
    <location>
        <begin position="72"/>
        <end position="73"/>
    </location>
    <ligand>
        <name>5-phospho-alpha-D-ribose 1-diphosphate</name>
        <dbReference type="ChEBI" id="CHEBI:58017"/>
        <note>ligand shared between dimeric partners</note>
    </ligand>
</feature>
<feature type="binding site" evidence="1">
    <location>
        <position position="99"/>
    </location>
    <ligand>
        <name>5-phospho-alpha-D-ribose 1-diphosphate</name>
        <dbReference type="ChEBI" id="CHEBI:58017"/>
        <note>ligand shared between dimeric partners</note>
    </ligand>
</feature>
<feature type="binding site" description="in other chain" evidence="1">
    <location>
        <position position="100"/>
    </location>
    <ligand>
        <name>5-phospho-alpha-D-ribose 1-diphosphate</name>
        <dbReference type="ChEBI" id="CHEBI:58017"/>
        <note>ligand shared between dimeric partners</note>
    </ligand>
</feature>
<feature type="binding site" evidence="1">
    <location>
        <position position="103"/>
    </location>
    <ligand>
        <name>5-phospho-alpha-D-ribose 1-diphosphate</name>
        <dbReference type="ChEBI" id="CHEBI:58017"/>
        <note>ligand shared between dimeric partners</note>
    </ligand>
</feature>
<feature type="binding site" evidence="1">
    <location>
        <position position="105"/>
    </location>
    <ligand>
        <name>5-phospho-alpha-D-ribose 1-diphosphate</name>
        <dbReference type="ChEBI" id="CHEBI:58017"/>
        <note>ligand shared between dimeric partners</note>
    </ligand>
</feature>
<feature type="binding site" description="in other chain" evidence="1">
    <location>
        <begin position="124"/>
        <end position="132"/>
    </location>
    <ligand>
        <name>5-phospho-alpha-D-ribose 1-diphosphate</name>
        <dbReference type="ChEBI" id="CHEBI:58017"/>
        <note>ligand shared between dimeric partners</note>
    </ligand>
</feature>
<feature type="binding site" evidence="1">
    <location>
        <position position="128"/>
    </location>
    <ligand>
        <name>orotate</name>
        <dbReference type="ChEBI" id="CHEBI:30839"/>
    </ligand>
</feature>
<feature type="binding site" evidence="1">
    <location>
        <position position="156"/>
    </location>
    <ligand>
        <name>orotate</name>
        <dbReference type="ChEBI" id="CHEBI:30839"/>
    </ligand>
</feature>
<dbReference type="EC" id="2.4.2.10" evidence="1"/>
<dbReference type="EMBL" id="CP000712">
    <property type="protein sequence ID" value="ABQ81317.1"/>
    <property type="molecule type" value="Genomic_DNA"/>
</dbReference>
<dbReference type="SMR" id="A5WB07"/>
<dbReference type="KEGG" id="ppf:Pput_5199"/>
<dbReference type="eggNOG" id="COG0461">
    <property type="taxonomic scope" value="Bacteria"/>
</dbReference>
<dbReference type="HOGENOM" id="CLU_074878_0_1_6"/>
<dbReference type="UniPathway" id="UPA00070">
    <property type="reaction ID" value="UER00119"/>
</dbReference>
<dbReference type="GO" id="GO:0005737">
    <property type="term" value="C:cytoplasm"/>
    <property type="evidence" value="ECO:0007669"/>
    <property type="project" value="TreeGrafter"/>
</dbReference>
<dbReference type="GO" id="GO:0000287">
    <property type="term" value="F:magnesium ion binding"/>
    <property type="evidence" value="ECO:0007669"/>
    <property type="project" value="UniProtKB-UniRule"/>
</dbReference>
<dbReference type="GO" id="GO:0004588">
    <property type="term" value="F:orotate phosphoribosyltransferase activity"/>
    <property type="evidence" value="ECO:0007669"/>
    <property type="project" value="UniProtKB-UniRule"/>
</dbReference>
<dbReference type="GO" id="GO:0006207">
    <property type="term" value="P:'de novo' pyrimidine nucleobase biosynthetic process"/>
    <property type="evidence" value="ECO:0007669"/>
    <property type="project" value="TreeGrafter"/>
</dbReference>
<dbReference type="GO" id="GO:0044205">
    <property type="term" value="P:'de novo' UMP biosynthetic process"/>
    <property type="evidence" value="ECO:0007669"/>
    <property type="project" value="UniProtKB-UniRule"/>
</dbReference>
<dbReference type="GO" id="GO:0046132">
    <property type="term" value="P:pyrimidine ribonucleoside biosynthetic process"/>
    <property type="evidence" value="ECO:0007669"/>
    <property type="project" value="TreeGrafter"/>
</dbReference>
<dbReference type="CDD" id="cd06223">
    <property type="entry name" value="PRTases_typeI"/>
    <property type="match status" value="1"/>
</dbReference>
<dbReference type="FunFam" id="3.40.50.2020:FF:000008">
    <property type="entry name" value="Orotate phosphoribosyltransferase"/>
    <property type="match status" value="1"/>
</dbReference>
<dbReference type="Gene3D" id="3.40.50.2020">
    <property type="match status" value="1"/>
</dbReference>
<dbReference type="HAMAP" id="MF_01208">
    <property type="entry name" value="PyrE"/>
    <property type="match status" value="1"/>
</dbReference>
<dbReference type="InterPro" id="IPR023031">
    <property type="entry name" value="OPRT"/>
</dbReference>
<dbReference type="InterPro" id="IPR004467">
    <property type="entry name" value="Or_phspho_trans_dom"/>
</dbReference>
<dbReference type="InterPro" id="IPR000836">
    <property type="entry name" value="PRibTrfase_dom"/>
</dbReference>
<dbReference type="InterPro" id="IPR029057">
    <property type="entry name" value="PRTase-like"/>
</dbReference>
<dbReference type="NCBIfam" id="TIGR00336">
    <property type="entry name" value="pyrE"/>
    <property type="match status" value="1"/>
</dbReference>
<dbReference type="PANTHER" id="PTHR46683">
    <property type="entry name" value="OROTATE PHOSPHORIBOSYLTRANSFERASE 1-RELATED"/>
    <property type="match status" value="1"/>
</dbReference>
<dbReference type="PANTHER" id="PTHR46683:SF1">
    <property type="entry name" value="OROTATE PHOSPHORIBOSYLTRANSFERASE 1-RELATED"/>
    <property type="match status" value="1"/>
</dbReference>
<dbReference type="Pfam" id="PF00156">
    <property type="entry name" value="Pribosyltran"/>
    <property type="match status" value="1"/>
</dbReference>
<dbReference type="SUPFAM" id="SSF53271">
    <property type="entry name" value="PRTase-like"/>
    <property type="match status" value="1"/>
</dbReference>
<dbReference type="PROSITE" id="PS00103">
    <property type="entry name" value="PUR_PYR_PR_TRANSFER"/>
    <property type="match status" value="1"/>
</dbReference>
<gene>
    <name evidence="1" type="primary">pyrE</name>
    <name type="ordered locus">Pput_5199</name>
</gene>
<evidence type="ECO:0000255" key="1">
    <source>
        <dbReference type="HAMAP-Rule" id="MF_01208"/>
    </source>
</evidence>
<comment type="function">
    <text evidence="1">Catalyzes the transfer of a ribosyl phosphate group from 5-phosphoribose 1-diphosphate to orotate, leading to the formation of orotidine monophosphate (OMP).</text>
</comment>
<comment type="catalytic activity">
    <reaction evidence="1">
        <text>orotidine 5'-phosphate + diphosphate = orotate + 5-phospho-alpha-D-ribose 1-diphosphate</text>
        <dbReference type="Rhea" id="RHEA:10380"/>
        <dbReference type="ChEBI" id="CHEBI:30839"/>
        <dbReference type="ChEBI" id="CHEBI:33019"/>
        <dbReference type="ChEBI" id="CHEBI:57538"/>
        <dbReference type="ChEBI" id="CHEBI:58017"/>
        <dbReference type="EC" id="2.4.2.10"/>
    </reaction>
</comment>
<comment type="cofactor">
    <cofactor evidence="1">
        <name>Mg(2+)</name>
        <dbReference type="ChEBI" id="CHEBI:18420"/>
    </cofactor>
</comment>
<comment type="pathway">
    <text evidence="1">Pyrimidine metabolism; UMP biosynthesis via de novo pathway; UMP from orotate: step 1/2.</text>
</comment>
<comment type="subunit">
    <text evidence="1">Homodimer.</text>
</comment>
<comment type="similarity">
    <text evidence="1">Belongs to the purine/pyrimidine phosphoribosyltransferase family. PyrE subfamily.</text>
</comment>
<reference key="1">
    <citation type="submission" date="2007-05" db="EMBL/GenBank/DDBJ databases">
        <title>Complete sequence of Pseudomonas putida F1.</title>
        <authorList>
            <consortium name="US DOE Joint Genome Institute"/>
            <person name="Copeland A."/>
            <person name="Lucas S."/>
            <person name="Lapidus A."/>
            <person name="Barry K."/>
            <person name="Detter J.C."/>
            <person name="Glavina del Rio T."/>
            <person name="Hammon N."/>
            <person name="Israni S."/>
            <person name="Dalin E."/>
            <person name="Tice H."/>
            <person name="Pitluck S."/>
            <person name="Chain P."/>
            <person name="Malfatti S."/>
            <person name="Shin M."/>
            <person name="Vergez L."/>
            <person name="Schmutz J."/>
            <person name="Larimer F."/>
            <person name="Land M."/>
            <person name="Hauser L."/>
            <person name="Kyrpides N."/>
            <person name="Lykidis A."/>
            <person name="Parales R."/>
            <person name="Richardson P."/>
        </authorList>
    </citation>
    <scope>NUCLEOTIDE SEQUENCE [LARGE SCALE GENOMIC DNA]</scope>
    <source>
        <strain>ATCC 700007 / DSM 6899 / JCM 31910 / BCRC 17059 / LMG 24140 / F1</strain>
    </source>
</reference>
<proteinExistence type="inferred from homology"/>
<sequence length="213" mass="23079">MQPYQRDFIRFAIDRGVLRFGEFTLKSGRTSPYFFNAGLFNTGSALAELGRCYAAAIVDSKIPFDVLFGPAYKGIPLAATTAVALADQHQLDVPWCFNRKEAKDHGEGGSLVGAPLAGDVLIIDDVITAGTAIREVMQIINAQQAKAAGVLIALNREERGNGELSAIQEVERDFGIPVVSIVSLTQVLEFLADDPQLKQHLPAVEAYRAQYGI</sequence>
<protein>
    <recommendedName>
        <fullName evidence="1">Orotate phosphoribosyltransferase</fullName>
        <shortName evidence="1">OPRT</shortName>
        <shortName evidence="1">OPRTase</shortName>
        <ecNumber evidence="1">2.4.2.10</ecNumber>
    </recommendedName>
</protein>
<name>PYRE_PSEP1</name>
<accession>A5WB07</accession>
<keyword id="KW-0328">Glycosyltransferase</keyword>
<keyword id="KW-0460">Magnesium</keyword>
<keyword id="KW-0665">Pyrimidine biosynthesis</keyword>
<keyword id="KW-0808">Transferase</keyword>